<organism>
    <name type="scientific">Cereibacter sphaeroides (strain ATCC 17025 / ATH 2.4.3)</name>
    <name type="common">Rhodobacter sphaeroides</name>
    <dbReference type="NCBI Taxonomy" id="349102"/>
    <lineage>
        <taxon>Bacteria</taxon>
        <taxon>Pseudomonadati</taxon>
        <taxon>Pseudomonadota</taxon>
        <taxon>Alphaproteobacteria</taxon>
        <taxon>Rhodobacterales</taxon>
        <taxon>Paracoccaceae</taxon>
        <taxon>Cereibacter</taxon>
    </lineage>
</organism>
<feature type="chain" id="PRO_0000358672" description="NADH-quinone oxidoreductase subunit C/D">
    <location>
        <begin position="1"/>
        <end position="580"/>
    </location>
</feature>
<feature type="region of interest" description="NADH dehydrogenase I subunit C" evidence="1">
    <location>
        <begin position="1"/>
        <end position="171"/>
    </location>
</feature>
<feature type="region of interest" description="NADH dehydrogenase I subunit D" evidence="1">
    <location>
        <begin position="195"/>
        <end position="580"/>
    </location>
</feature>
<accession>A4WT70</accession>
<sequence>MSFDQVIADALQALRSRFGADILSEQATGEGFPVLWLAAPAWEAAHRFLREEISAPFPLLADLWAIDESQRQHRAGQPASRLTLCSHLVSLERNADLRLKLATDGRAPSVAGVYANADWYEREAHDMFGLDFGRETRRLLMPPTWEGHPLLKTHYARATEKPPFVLTDRLFEAEERATITDPDLLGLPGLRDGEELMVLNFGPHHPSTHGVFRILLGLDGEEVVWAWPDIGYHHRGVEKMAERQTWHGFIPYCDRVDYLGGVISELPYLLAVERLCGIAVPPRAQMIRVMLCEFYRIMNHLLFYGTMAQDVGAMSPVFYMFTDREKGHEILNAITGARMHPAFFRIGGVAMDLPRGWDAMVRDFLDWMPGRLDEYERMVLRSELFRARTVGVGAYDTDTALTWGTTGPGLRATGCNWDLRKQRPYCGYEQFDFEVPLGQRGDIFDRTRVRADEMRESLKIIRQCLENMPEGAVKADHPLTTPPPRGAMQTDIETLIAHFLQSSWGTVVPAGEATGQIEGHRGLTQYAIVSDGGTQSYRTRIRTPSFAHLQMIPEIVPGMTVADLVAHIASIDFVMSDVDR</sequence>
<name>NUOCD_CERS5</name>
<comment type="function">
    <text evidence="1">NDH-1 shuttles electrons from NADH, via FMN and iron-sulfur (Fe-S) centers, to quinones in the respiratory chain. The immediate electron acceptor for the enzyme in this species is believed to be ubiquinone. Couples the redox reaction to proton translocation (for every two electrons transferred, four hydrogen ions are translocated across the cytoplasmic membrane), and thus conserves the redox energy in a proton gradient.</text>
</comment>
<comment type="catalytic activity">
    <reaction evidence="1">
        <text>a quinone + NADH + 5 H(+)(in) = a quinol + NAD(+) + 4 H(+)(out)</text>
        <dbReference type="Rhea" id="RHEA:57888"/>
        <dbReference type="ChEBI" id="CHEBI:15378"/>
        <dbReference type="ChEBI" id="CHEBI:24646"/>
        <dbReference type="ChEBI" id="CHEBI:57540"/>
        <dbReference type="ChEBI" id="CHEBI:57945"/>
        <dbReference type="ChEBI" id="CHEBI:132124"/>
    </reaction>
</comment>
<comment type="subunit">
    <text evidence="1">NDH-1 is composed of 13 different subunits. Subunits NuoB, CD, E, F, and G constitute the peripheral sector of the complex.</text>
</comment>
<comment type="subcellular location">
    <subcellularLocation>
        <location evidence="1">Cell inner membrane</location>
        <topology evidence="1">Peripheral membrane protein</topology>
        <orientation evidence="1">Cytoplasmic side</orientation>
    </subcellularLocation>
</comment>
<comment type="similarity">
    <text evidence="1">In the N-terminal section; belongs to the complex I 30 kDa subunit family.</text>
</comment>
<comment type="similarity">
    <text evidence="1">In the C-terminal section; belongs to the complex I 49 kDa subunit family.</text>
</comment>
<protein>
    <recommendedName>
        <fullName evidence="1">NADH-quinone oxidoreductase subunit C/D</fullName>
        <ecNumber evidence="1">7.1.1.-</ecNumber>
    </recommendedName>
    <alternativeName>
        <fullName evidence="1">NADH dehydrogenase I subunit C/D</fullName>
    </alternativeName>
    <alternativeName>
        <fullName evidence="1">NDH-1 subunit C/D</fullName>
    </alternativeName>
</protein>
<keyword id="KW-0997">Cell inner membrane</keyword>
<keyword id="KW-1003">Cell membrane</keyword>
<keyword id="KW-0472">Membrane</keyword>
<keyword id="KW-0511">Multifunctional enzyme</keyword>
<keyword id="KW-0520">NAD</keyword>
<keyword id="KW-0874">Quinone</keyword>
<keyword id="KW-1278">Translocase</keyword>
<keyword id="KW-0813">Transport</keyword>
<keyword id="KW-0830">Ubiquinone</keyword>
<dbReference type="EC" id="7.1.1.-" evidence="1"/>
<dbReference type="EMBL" id="CP000661">
    <property type="protein sequence ID" value="ABP70584.1"/>
    <property type="molecule type" value="Genomic_DNA"/>
</dbReference>
<dbReference type="SMR" id="A4WT70"/>
<dbReference type="STRING" id="349102.Rsph17025_1691"/>
<dbReference type="KEGG" id="rsq:Rsph17025_1691"/>
<dbReference type="eggNOG" id="COG0649">
    <property type="taxonomic scope" value="Bacteria"/>
</dbReference>
<dbReference type="eggNOG" id="COG0852">
    <property type="taxonomic scope" value="Bacteria"/>
</dbReference>
<dbReference type="HOGENOM" id="CLU_015134_3_2_5"/>
<dbReference type="BioCyc" id="RSPH349102:G1G8M-1739-MONOMER"/>
<dbReference type="GO" id="GO:0030964">
    <property type="term" value="C:NADH dehydrogenase complex"/>
    <property type="evidence" value="ECO:0007669"/>
    <property type="project" value="InterPro"/>
</dbReference>
<dbReference type="GO" id="GO:0005886">
    <property type="term" value="C:plasma membrane"/>
    <property type="evidence" value="ECO:0007669"/>
    <property type="project" value="UniProtKB-SubCell"/>
</dbReference>
<dbReference type="GO" id="GO:0051287">
    <property type="term" value="F:NAD binding"/>
    <property type="evidence" value="ECO:0007669"/>
    <property type="project" value="InterPro"/>
</dbReference>
<dbReference type="GO" id="GO:0008137">
    <property type="term" value="F:NADH dehydrogenase (ubiquinone) activity"/>
    <property type="evidence" value="ECO:0007669"/>
    <property type="project" value="InterPro"/>
</dbReference>
<dbReference type="GO" id="GO:0050136">
    <property type="term" value="F:NADH:ubiquinone reductase (non-electrogenic) activity"/>
    <property type="evidence" value="ECO:0007669"/>
    <property type="project" value="UniProtKB-UniRule"/>
</dbReference>
<dbReference type="GO" id="GO:0048038">
    <property type="term" value="F:quinone binding"/>
    <property type="evidence" value="ECO:0007669"/>
    <property type="project" value="UniProtKB-KW"/>
</dbReference>
<dbReference type="Gene3D" id="1.10.645.10">
    <property type="entry name" value="Cytochrome-c3 Hydrogenase, chain B"/>
    <property type="match status" value="1"/>
</dbReference>
<dbReference type="Gene3D" id="3.30.460.80">
    <property type="entry name" value="NADH:ubiquinone oxidoreductase, 30kDa subunit"/>
    <property type="match status" value="1"/>
</dbReference>
<dbReference type="HAMAP" id="MF_01359">
    <property type="entry name" value="NDH1_NuoCD_1"/>
    <property type="match status" value="1"/>
</dbReference>
<dbReference type="HAMAP" id="MF_01358">
    <property type="entry name" value="NDH1_NuoD"/>
    <property type="match status" value="1"/>
</dbReference>
<dbReference type="InterPro" id="IPR023062">
    <property type="entry name" value="NADH_DH_suCD"/>
</dbReference>
<dbReference type="InterPro" id="IPR001135">
    <property type="entry name" value="NADH_Q_OxRdtase_suD"/>
</dbReference>
<dbReference type="InterPro" id="IPR037232">
    <property type="entry name" value="NADH_quin_OxRdtase_su_C/D-like"/>
</dbReference>
<dbReference type="InterPro" id="IPR001268">
    <property type="entry name" value="NADH_UbQ_OxRdtase_30kDa_su"/>
</dbReference>
<dbReference type="InterPro" id="IPR014029">
    <property type="entry name" value="NADH_UbQ_OxRdtase_49kDa_CS"/>
</dbReference>
<dbReference type="InterPro" id="IPR022885">
    <property type="entry name" value="NDH1_su_D/H"/>
</dbReference>
<dbReference type="InterPro" id="IPR029014">
    <property type="entry name" value="NiFe-Hase_large"/>
</dbReference>
<dbReference type="NCBIfam" id="TIGR01962">
    <property type="entry name" value="NuoD"/>
    <property type="match status" value="1"/>
</dbReference>
<dbReference type="NCBIfam" id="NF004739">
    <property type="entry name" value="PRK06075.1"/>
    <property type="match status" value="1"/>
</dbReference>
<dbReference type="NCBIfam" id="NF008728">
    <property type="entry name" value="PRK11742.1"/>
    <property type="match status" value="1"/>
</dbReference>
<dbReference type="PANTHER" id="PTHR11993:SF45">
    <property type="entry name" value="NADH-QUINONE OXIDOREDUCTASE SUBUNIT C_D"/>
    <property type="match status" value="1"/>
</dbReference>
<dbReference type="PANTHER" id="PTHR11993">
    <property type="entry name" value="NADH-UBIQUINONE OXIDOREDUCTASE 49 KDA SUBUNIT"/>
    <property type="match status" value="1"/>
</dbReference>
<dbReference type="Pfam" id="PF00329">
    <property type="entry name" value="Complex1_30kDa"/>
    <property type="match status" value="1"/>
</dbReference>
<dbReference type="Pfam" id="PF00346">
    <property type="entry name" value="Complex1_49kDa"/>
    <property type="match status" value="1"/>
</dbReference>
<dbReference type="SUPFAM" id="SSF56762">
    <property type="entry name" value="HydB/Nqo4-like"/>
    <property type="match status" value="1"/>
</dbReference>
<dbReference type="SUPFAM" id="SSF143243">
    <property type="entry name" value="Nqo5-like"/>
    <property type="match status" value="1"/>
</dbReference>
<dbReference type="PROSITE" id="PS00535">
    <property type="entry name" value="COMPLEX1_49K"/>
    <property type="match status" value="1"/>
</dbReference>
<evidence type="ECO:0000255" key="1">
    <source>
        <dbReference type="HAMAP-Rule" id="MF_01359"/>
    </source>
</evidence>
<reference key="1">
    <citation type="submission" date="2007-04" db="EMBL/GenBank/DDBJ databases">
        <title>Complete sequence of chromosome of Rhodobacter sphaeroides ATCC 17025.</title>
        <authorList>
            <consortium name="US DOE Joint Genome Institute"/>
            <person name="Copeland A."/>
            <person name="Lucas S."/>
            <person name="Lapidus A."/>
            <person name="Barry K."/>
            <person name="Detter J.C."/>
            <person name="Glavina del Rio T."/>
            <person name="Hammon N."/>
            <person name="Israni S."/>
            <person name="Dalin E."/>
            <person name="Tice H."/>
            <person name="Pitluck S."/>
            <person name="Chertkov O."/>
            <person name="Brettin T."/>
            <person name="Bruce D."/>
            <person name="Han C."/>
            <person name="Schmutz J."/>
            <person name="Larimer F."/>
            <person name="Land M."/>
            <person name="Hauser L."/>
            <person name="Kyrpides N."/>
            <person name="Kim E."/>
            <person name="Richardson P."/>
            <person name="Mackenzie C."/>
            <person name="Choudhary M."/>
            <person name="Donohue T.J."/>
            <person name="Kaplan S."/>
        </authorList>
    </citation>
    <scope>NUCLEOTIDE SEQUENCE [LARGE SCALE GENOMIC DNA]</scope>
    <source>
        <strain>ATCC 17025 / ATH 2.4.3</strain>
    </source>
</reference>
<proteinExistence type="inferred from homology"/>
<gene>
    <name evidence="1" type="primary">nuoC</name>
    <name evidence="1" type="synonym">nuoCD</name>
    <name evidence="1" type="synonym">nuoD</name>
    <name type="ordered locus">Rsph17025_1691</name>
</gene>